<feature type="chain" id="PRO_0000163155" description="DNA-directed RNA polymerase subunit epsilon">
    <location>
        <begin position="1"/>
        <end position="76"/>
    </location>
</feature>
<name>RPOY_STRT1</name>
<keyword id="KW-0240">DNA-directed RNA polymerase</keyword>
<keyword id="KW-0548">Nucleotidyltransferase</keyword>
<keyword id="KW-0804">Transcription</keyword>
<keyword id="KW-0808">Transferase</keyword>
<comment type="function">
    <text evidence="1">A non-essential component of RNA polymerase (RNAP).</text>
</comment>
<comment type="catalytic activity">
    <reaction evidence="1">
        <text>RNA(n) + a ribonucleoside 5'-triphosphate = RNA(n+1) + diphosphate</text>
        <dbReference type="Rhea" id="RHEA:21248"/>
        <dbReference type="Rhea" id="RHEA-COMP:14527"/>
        <dbReference type="Rhea" id="RHEA-COMP:17342"/>
        <dbReference type="ChEBI" id="CHEBI:33019"/>
        <dbReference type="ChEBI" id="CHEBI:61557"/>
        <dbReference type="ChEBI" id="CHEBI:140395"/>
        <dbReference type="EC" id="2.7.7.6"/>
    </reaction>
</comment>
<comment type="subunit">
    <text evidence="1">RNAP is composed of a core of 2 alpha, a beta and a beta' subunit. The core is associated with a delta subunit, and at least one of epsilon or omega. When a sigma factor is associated with the core the holoenzyme is formed, which can initiate transcription.</text>
</comment>
<comment type="similarity">
    <text evidence="1">Belongs to the RNA polymerase subunit epsilon family.</text>
</comment>
<gene>
    <name evidence="1" type="primary">rpoY</name>
    <name type="ordered locus">str1773</name>
</gene>
<sequence length="76" mass="9143">MIYKVFYQETKERSPRREQTKSLYLDIDAETELEGRIQARQIIEKNTAYNIEFIELLSEKALEYEKETGVFEVTEF</sequence>
<organism>
    <name type="scientific">Streptococcus thermophilus (strain CNRZ 1066)</name>
    <dbReference type="NCBI Taxonomy" id="299768"/>
    <lineage>
        <taxon>Bacteria</taxon>
        <taxon>Bacillati</taxon>
        <taxon>Bacillota</taxon>
        <taxon>Bacilli</taxon>
        <taxon>Lactobacillales</taxon>
        <taxon>Streptococcaceae</taxon>
        <taxon>Streptococcus</taxon>
    </lineage>
</organism>
<evidence type="ECO:0000255" key="1">
    <source>
        <dbReference type="HAMAP-Rule" id="MF_01553"/>
    </source>
</evidence>
<accession>Q5LY29</accession>
<proteinExistence type="inferred from homology"/>
<dbReference type="EC" id="2.7.7.6" evidence="1"/>
<dbReference type="EMBL" id="CP000024">
    <property type="protein sequence ID" value="AAV63291.1"/>
    <property type="molecule type" value="Genomic_DNA"/>
</dbReference>
<dbReference type="RefSeq" id="WP_002947111.1">
    <property type="nucleotide sequence ID" value="NC_006449.1"/>
</dbReference>
<dbReference type="SMR" id="Q5LY29"/>
<dbReference type="KEGG" id="stc:str1773"/>
<dbReference type="HOGENOM" id="CLU_187518_0_0_9"/>
<dbReference type="GO" id="GO:0000428">
    <property type="term" value="C:DNA-directed RNA polymerase complex"/>
    <property type="evidence" value="ECO:0007669"/>
    <property type="project" value="UniProtKB-KW"/>
</dbReference>
<dbReference type="GO" id="GO:0003677">
    <property type="term" value="F:DNA binding"/>
    <property type="evidence" value="ECO:0007669"/>
    <property type="project" value="UniProtKB-UniRule"/>
</dbReference>
<dbReference type="GO" id="GO:0003899">
    <property type="term" value="F:DNA-directed RNA polymerase activity"/>
    <property type="evidence" value="ECO:0007669"/>
    <property type="project" value="UniProtKB-UniRule"/>
</dbReference>
<dbReference type="GO" id="GO:0006351">
    <property type="term" value="P:DNA-templated transcription"/>
    <property type="evidence" value="ECO:0007669"/>
    <property type="project" value="UniProtKB-UniRule"/>
</dbReference>
<dbReference type="Gene3D" id="3.10.20.730">
    <property type="entry name" value="RNAP, epsilon subunit-like"/>
    <property type="match status" value="1"/>
</dbReference>
<dbReference type="HAMAP" id="MF_01553">
    <property type="entry name" value="RNApol_bact_RpoY"/>
    <property type="match status" value="1"/>
</dbReference>
<dbReference type="InterPro" id="IPR009907">
    <property type="entry name" value="RpoY"/>
</dbReference>
<dbReference type="NCBIfam" id="NF010188">
    <property type="entry name" value="PRK13667.1"/>
    <property type="match status" value="1"/>
</dbReference>
<dbReference type="Pfam" id="PF07288">
    <property type="entry name" value="RpoY"/>
    <property type="match status" value="1"/>
</dbReference>
<reference key="1">
    <citation type="journal article" date="2004" name="Nat. Biotechnol.">
        <title>Complete sequence and comparative genome analysis of the dairy bacterium Streptococcus thermophilus.</title>
        <authorList>
            <person name="Bolotin A."/>
            <person name="Quinquis B."/>
            <person name="Renault P."/>
            <person name="Sorokin A."/>
            <person name="Ehrlich S.D."/>
            <person name="Kulakauskas S."/>
            <person name="Lapidus A."/>
            <person name="Goltsman E."/>
            <person name="Mazur M."/>
            <person name="Pusch G.D."/>
            <person name="Fonstein M."/>
            <person name="Overbeek R."/>
            <person name="Kyprides N."/>
            <person name="Purnelle B."/>
            <person name="Prozzi D."/>
            <person name="Ngui K."/>
            <person name="Masuy D."/>
            <person name="Hancy F."/>
            <person name="Burteau S."/>
            <person name="Boutry M."/>
            <person name="Delcour J."/>
            <person name="Goffeau A."/>
            <person name="Hols P."/>
        </authorList>
    </citation>
    <scope>NUCLEOTIDE SEQUENCE [LARGE SCALE GENOMIC DNA]</scope>
    <source>
        <strain>CNRZ 1066</strain>
    </source>
</reference>
<protein>
    <recommendedName>
        <fullName evidence="1">DNA-directed RNA polymerase subunit epsilon</fullName>
        <shortName evidence="1">RNAP epsilon subunit</shortName>
        <ecNumber evidence="1">2.7.7.6</ecNumber>
    </recommendedName>
    <alternativeName>
        <fullName evidence="1">RNA polymerase epsilon subunit</fullName>
    </alternativeName>
    <alternativeName>
        <fullName evidence="1">Transcriptase subunit epsilon</fullName>
    </alternativeName>
</protein>